<dbReference type="EMBL" id="AM777385">
    <property type="protein sequence ID" value="CAO86025.1"/>
    <property type="molecule type" value="Genomic_DNA"/>
</dbReference>
<dbReference type="RefSeq" id="YP_001531331.1">
    <property type="nucleotide sequence ID" value="NC_009950.1"/>
</dbReference>
<dbReference type="SMR" id="A8Y9D6"/>
<dbReference type="GeneID" id="5696635"/>
<dbReference type="KEGG" id="lper:5696635"/>
<dbReference type="GO" id="GO:0009535">
    <property type="term" value="C:chloroplast thylakoid membrane"/>
    <property type="evidence" value="ECO:0007669"/>
    <property type="project" value="UniProtKB-SubCell"/>
</dbReference>
<dbReference type="GO" id="GO:0005886">
    <property type="term" value="C:plasma membrane"/>
    <property type="evidence" value="ECO:0007669"/>
    <property type="project" value="TreeGrafter"/>
</dbReference>
<dbReference type="GO" id="GO:0020037">
    <property type="term" value="F:heme binding"/>
    <property type="evidence" value="ECO:0007669"/>
    <property type="project" value="InterPro"/>
</dbReference>
<dbReference type="GO" id="GO:0017004">
    <property type="term" value="P:cytochrome complex assembly"/>
    <property type="evidence" value="ECO:0007669"/>
    <property type="project" value="UniProtKB-UniRule"/>
</dbReference>
<dbReference type="HAMAP" id="MF_01391">
    <property type="entry name" value="CytC_CcsA"/>
    <property type="match status" value="1"/>
</dbReference>
<dbReference type="InterPro" id="IPR002541">
    <property type="entry name" value="Cyt_c_assembly"/>
</dbReference>
<dbReference type="InterPro" id="IPR017562">
    <property type="entry name" value="Cyt_c_biogenesis_CcsA"/>
</dbReference>
<dbReference type="InterPro" id="IPR045062">
    <property type="entry name" value="Cyt_c_biogenesis_CcsA/CcmC"/>
</dbReference>
<dbReference type="NCBIfam" id="TIGR03144">
    <property type="entry name" value="cytochr_II_ccsB"/>
    <property type="match status" value="1"/>
</dbReference>
<dbReference type="PANTHER" id="PTHR30071:SF1">
    <property type="entry name" value="CYTOCHROME B_B6 PROTEIN-RELATED"/>
    <property type="match status" value="1"/>
</dbReference>
<dbReference type="PANTHER" id="PTHR30071">
    <property type="entry name" value="HEME EXPORTER PROTEIN C"/>
    <property type="match status" value="1"/>
</dbReference>
<dbReference type="Pfam" id="PF01578">
    <property type="entry name" value="Cytochrom_C_asm"/>
    <property type="match status" value="1"/>
</dbReference>
<geneLocation type="chloroplast"/>
<sequence length="319" mass="36261">MLFATLEHILNHISFSTISIVITIHLITLLVHELGGLRDSSEKGMIVTFFSITGFLVSRWASSGHFPLSNLYESLIFLSWALYILHTIPKIQNSKNDLSTITTPSTILTQGFATSGLLTEMHQSTILVPALQSQWLMMHVSMMLLSYATLLCGSLLSAAILIIRFRNNFFFFSKKKKNVLLKTFFFSDFYVKRSSLKSTSVPSFPNYYKYQLTERLDSWSYRVISLGFTLLTIGILCGAVWANDAWGSYWNWDPKETWAFITWTIFAIYLHSRTNLNWKGTNSALVASIGFLIIWICYFGINLLGIGLHSYGSFILTSK</sequence>
<protein>
    <recommendedName>
        <fullName evidence="1">Cytochrome c biogenesis protein CcsA</fullName>
    </recommendedName>
</protein>
<comment type="function">
    <text evidence="1">Required during biogenesis of c-type cytochromes (cytochrome c6 and cytochrome f) at the step of heme attachment.</text>
</comment>
<comment type="subunit">
    <text evidence="1">May interact with Ccs1.</text>
</comment>
<comment type="subcellular location">
    <subcellularLocation>
        <location evidence="1">Plastid</location>
        <location evidence="1">Chloroplast thylakoid membrane</location>
        <topology evidence="1">Multi-pass membrane protein</topology>
    </subcellularLocation>
</comment>
<comment type="similarity">
    <text evidence="1">Belongs to the CcmF/CycK/Ccl1/NrfE/CcsA family.</text>
</comment>
<organism>
    <name type="scientific">Lolium perenne</name>
    <name type="common">Perennial ryegrass</name>
    <dbReference type="NCBI Taxonomy" id="4522"/>
    <lineage>
        <taxon>Eukaryota</taxon>
        <taxon>Viridiplantae</taxon>
        <taxon>Streptophyta</taxon>
        <taxon>Embryophyta</taxon>
        <taxon>Tracheophyta</taxon>
        <taxon>Spermatophyta</taxon>
        <taxon>Magnoliopsida</taxon>
        <taxon>Liliopsida</taxon>
        <taxon>Poales</taxon>
        <taxon>Poaceae</taxon>
        <taxon>BOP clade</taxon>
        <taxon>Pooideae</taxon>
        <taxon>Poodae</taxon>
        <taxon>Poeae</taxon>
        <taxon>Poeae Chloroplast Group 2 (Poeae type)</taxon>
        <taxon>Loliodinae</taxon>
        <taxon>Loliinae</taxon>
        <taxon>Lolium</taxon>
    </lineage>
</organism>
<feature type="chain" id="PRO_0000353767" description="Cytochrome c biogenesis protein CcsA">
    <location>
        <begin position="1"/>
        <end position="319"/>
    </location>
</feature>
<feature type="transmembrane region" description="Helical" evidence="1">
    <location>
        <begin position="17"/>
        <end position="37"/>
    </location>
</feature>
<feature type="transmembrane region" description="Helical" evidence="1">
    <location>
        <begin position="44"/>
        <end position="64"/>
    </location>
</feature>
<feature type="transmembrane region" description="Helical" evidence="1">
    <location>
        <begin position="68"/>
        <end position="88"/>
    </location>
</feature>
<feature type="transmembrane region" description="Helical" evidence="1">
    <location>
        <begin position="143"/>
        <end position="163"/>
    </location>
</feature>
<feature type="transmembrane region" description="Helical" evidence="1">
    <location>
        <begin position="223"/>
        <end position="243"/>
    </location>
</feature>
<feature type="transmembrane region" description="Helical" evidence="1">
    <location>
        <begin position="257"/>
        <end position="271"/>
    </location>
</feature>
<feature type="transmembrane region" description="Helical" evidence="1">
    <location>
        <begin position="286"/>
        <end position="306"/>
    </location>
</feature>
<proteinExistence type="inferred from homology"/>
<reference key="1">
    <citation type="journal article" date="2008" name="PLoS ONE">
        <title>An optimized chloroplast DNA extraction protocol for grasses (Poaceae) proves suitable for whole plastid genome sequencing and SNP detection.</title>
        <authorList>
            <person name="Diekmann K."/>
            <person name="Hodkinson T.R."/>
            <person name="Fricke E."/>
            <person name="Barth S."/>
        </authorList>
    </citation>
    <scope>NUCLEOTIDE SEQUENCE [LARGE SCALE GENOMIC DNA]</scope>
    <source>
        <strain>cv. Cashel</strain>
    </source>
</reference>
<gene>
    <name evidence="1" type="primary">ccsA</name>
    <name type="ordered locus">LopeCp105</name>
</gene>
<accession>A8Y9D6</accession>
<name>CCSA_LOLPR</name>
<keyword id="KW-0150">Chloroplast</keyword>
<keyword id="KW-0201">Cytochrome c-type biogenesis</keyword>
<keyword id="KW-0472">Membrane</keyword>
<keyword id="KW-0934">Plastid</keyword>
<keyword id="KW-0793">Thylakoid</keyword>
<keyword id="KW-0812">Transmembrane</keyword>
<keyword id="KW-1133">Transmembrane helix</keyword>
<evidence type="ECO:0000255" key="1">
    <source>
        <dbReference type="HAMAP-Rule" id="MF_01391"/>
    </source>
</evidence>